<protein>
    <recommendedName>
        <fullName evidence="2">Deoxyguanosinetriphosphate triphosphohydrolase</fullName>
        <shortName evidence="2">dGTP triphosphohydrolase</shortName>
        <shortName evidence="2">dGTPase</shortName>
        <ecNumber evidence="2">3.1.5.1</ecNumber>
    </recommendedName>
</protein>
<sequence>MASIDFRNKINWHRRYRSPQGVKTEHEILRIFESDRGRIINSPAIRRLQQKTQVFPLERNAAVRTRLTHSMEVQQVGRYIAKEILSRLKEQNRLEEYGLDALTGPFESIVEMACLMHDIGNPPFGHFGEAAINDWFRQRLHPEDAESQPLTHDRCVVSSLRLQEGEENLNDIRRKVRQDICHFEGNAQGIRLVHTLMRMNLTWAQVGGILKYTRPAWWRGPVPDSHRYLMKKPGYYLSEEKYIARLRKELQLAPYSRFPLTWIMEAADDISYCVADLEDAVEKRIFSVEQLYHHLYHAWGHHEKDSLFELVVGNAWEKSRANTLSRSTEDQFFMYLRVNTLNKLVPYAAQRFIDNLPQIFAGTFNQALLEDASGFSRLLELYKNVAVEHVFSHPDVEQLELQGYRVISGLLDIYQPLLSLSLNDFRELVEKERLKRFPIESRLFQKLSTRHRLAYVEVVSKLPTDSAEYPVLEYYYRCRLIQDYISGMTDLYAWDEYRRLMAVEQ</sequence>
<name>DGTP_SALTI</name>
<reference key="1">
    <citation type="journal article" date="2001" name="Nature">
        <title>Complete genome sequence of a multiple drug resistant Salmonella enterica serovar Typhi CT18.</title>
        <authorList>
            <person name="Parkhill J."/>
            <person name="Dougan G."/>
            <person name="James K.D."/>
            <person name="Thomson N.R."/>
            <person name="Pickard D."/>
            <person name="Wain J."/>
            <person name="Churcher C.M."/>
            <person name="Mungall K.L."/>
            <person name="Bentley S.D."/>
            <person name="Holden M.T.G."/>
            <person name="Sebaihia M."/>
            <person name="Baker S."/>
            <person name="Basham D."/>
            <person name="Brooks K."/>
            <person name="Chillingworth T."/>
            <person name="Connerton P."/>
            <person name="Cronin A."/>
            <person name="Davis P."/>
            <person name="Davies R.M."/>
            <person name="Dowd L."/>
            <person name="White N."/>
            <person name="Farrar J."/>
            <person name="Feltwell T."/>
            <person name="Hamlin N."/>
            <person name="Haque A."/>
            <person name="Hien T.T."/>
            <person name="Holroyd S."/>
            <person name="Jagels K."/>
            <person name="Krogh A."/>
            <person name="Larsen T.S."/>
            <person name="Leather S."/>
            <person name="Moule S."/>
            <person name="O'Gaora P."/>
            <person name="Parry C."/>
            <person name="Quail M.A."/>
            <person name="Rutherford K.M."/>
            <person name="Simmonds M."/>
            <person name="Skelton J."/>
            <person name="Stevens K."/>
            <person name="Whitehead S."/>
            <person name="Barrell B.G."/>
        </authorList>
    </citation>
    <scope>NUCLEOTIDE SEQUENCE [LARGE SCALE GENOMIC DNA]</scope>
    <source>
        <strain>CT18</strain>
    </source>
</reference>
<reference key="2">
    <citation type="journal article" date="2003" name="J. Bacteriol.">
        <title>Comparative genomics of Salmonella enterica serovar Typhi strains Ty2 and CT18.</title>
        <authorList>
            <person name="Deng W."/>
            <person name="Liou S.-R."/>
            <person name="Plunkett G. III"/>
            <person name="Mayhew G.F."/>
            <person name="Rose D.J."/>
            <person name="Burland V."/>
            <person name="Kodoyianni V."/>
            <person name="Schwartz D.C."/>
            <person name="Blattner F.R."/>
        </authorList>
    </citation>
    <scope>NUCLEOTIDE SEQUENCE [LARGE SCALE GENOMIC DNA]</scope>
    <source>
        <strain>ATCC 700931 / Ty2</strain>
    </source>
</reference>
<evidence type="ECO:0000250" key="1"/>
<evidence type="ECO:0000255" key="2">
    <source>
        <dbReference type="HAMAP-Rule" id="MF_00030"/>
    </source>
</evidence>
<evidence type="ECO:0000255" key="3">
    <source>
        <dbReference type="PROSITE-ProRule" id="PRU01175"/>
    </source>
</evidence>
<comment type="function">
    <text evidence="2">dGTPase preferentially hydrolyzes dGTP over the other canonical NTPs.</text>
</comment>
<comment type="catalytic activity">
    <reaction evidence="2">
        <text>dGTP + H2O = 2'-deoxyguanosine + triphosphate + H(+)</text>
        <dbReference type="Rhea" id="RHEA:15193"/>
        <dbReference type="ChEBI" id="CHEBI:15377"/>
        <dbReference type="ChEBI" id="CHEBI:15378"/>
        <dbReference type="ChEBI" id="CHEBI:17172"/>
        <dbReference type="ChEBI" id="CHEBI:18036"/>
        <dbReference type="ChEBI" id="CHEBI:61429"/>
        <dbReference type="EC" id="3.1.5.1"/>
    </reaction>
</comment>
<comment type="cofactor">
    <cofactor evidence="2">
        <name>Mg(2+)</name>
        <dbReference type="ChEBI" id="CHEBI:18420"/>
    </cofactor>
</comment>
<comment type="subunit">
    <text evidence="2">Homotetramer.</text>
</comment>
<comment type="similarity">
    <text evidence="2">Belongs to the dGTPase family. Type 1 subfamily.</text>
</comment>
<keyword id="KW-0378">Hydrolase</keyword>
<keyword id="KW-0460">Magnesium</keyword>
<dbReference type="EC" id="3.1.5.1" evidence="2"/>
<dbReference type="EMBL" id="AL513382">
    <property type="protein sequence ID" value="CAD01362.1"/>
    <property type="molecule type" value="Genomic_DNA"/>
</dbReference>
<dbReference type="EMBL" id="AE014613">
    <property type="protein sequence ID" value="AAO67940.1"/>
    <property type="molecule type" value="Genomic_DNA"/>
</dbReference>
<dbReference type="RefSeq" id="NP_454816.1">
    <property type="nucleotide sequence ID" value="NC_003198.1"/>
</dbReference>
<dbReference type="RefSeq" id="WP_000146450.1">
    <property type="nucleotide sequence ID" value="NZ_WSUR01000009.1"/>
</dbReference>
<dbReference type="SMR" id="Q8Z9B1"/>
<dbReference type="STRING" id="220341.gene:17584264"/>
<dbReference type="KEGG" id="stt:t0209"/>
<dbReference type="KEGG" id="sty:STY0230"/>
<dbReference type="PATRIC" id="fig|220341.7.peg.231"/>
<dbReference type="eggNOG" id="COG0232">
    <property type="taxonomic scope" value="Bacteria"/>
</dbReference>
<dbReference type="HOGENOM" id="CLU_028163_2_1_6"/>
<dbReference type="OMA" id="ICYTIID"/>
<dbReference type="OrthoDB" id="9803619at2"/>
<dbReference type="Proteomes" id="UP000000541">
    <property type="component" value="Chromosome"/>
</dbReference>
<dbReference type="Proteomes" id="UP000002670">
    <property type="component" value="Chromosome"/>
</dbReference>
<dbReference type="GO" id="GO:0008832">
    <property type="term" value="F:dGTPase activity"/>
    <property type="evidence" value="ECO:0007669"/>
    <property type="project" value="UniProtKB-UniRule"/>
</dbReference>
<dbReference type="GO" id="GO:0000287">
    <property type="term" value="F:magnesium ion binding"/>
    <property type="evidence" value="ECO:0007669"/>
    <property type="project" value="UniProtKB-UniRule"/>
</dbReference>
<dbReference type="GO" id="GO:0006203">
    <property type="term" value="P:dGTP catabolic process"/>
    <property type="evidence" value="ECO:0007669"/>
    <property type="project" value="InterPro"/>
</dbReference>
<dbReference type="CDD" id="cd00077">
    <property type="entry name" value="HDc"/>
    <property type="match status" value="1"/>
</dbReference>
<dbReference type="FunFam" id="1.10.3210.10:FF:000009">
    <property type="entry name" value="Deoxyguanosinetriphosphate triphosphohydrolase"/>
    <property type="match status" value="1"/>
</dbReference>
<dbReference type="FunFam" id="1.10.3210.10:FF:000010">
    <property type="entry name" value="Deoxyguanosinetriphosphate triphosphohydrolase"/>
    <property type="match status" value="1"/>
</dbReference>
<dbReference type="FunFam" id="1.10.3410.10:FF:000001">
    <property type="entry name" value="Deoxyguanosinetriphosphate triphosphohydrolase"/>
    <property type="match status" value="1"/>
</dbReference>
<dbReference type="Gene3D" id="1.10.3210.10">
    <property type="entry name" value="Hypothetical protein af1432"/>
    <property type="match status" value="3"/>
</dbReference>
<dbReference type="Gene3D" id="1.10.3410.10">
    <property type="entry name" value="putative deoxyguanosinetriphosphate triphosphohydrolase like domain"/>
    <property type="match status" value="1"/>
</dbReference>
<dbReference type="HAMAP" id="MF_00030">
    <property type="entry name" value="dGTPase_type1"/>
    <property type="match status" value="1"/>
</dbReference>
<dbReference type="InterPro" id="IPR023293">
    <property type="entry name" value="dGTP_triP_hydro_central_sf"/>
</dbReference>
<dbReference type="InterPro" id="IPR006261">
    <property type="entry name" value="dGTPase"/>
</dbReference>
<dbReference type="InterPro" id="IPR050135">
    <property type="entry name" value="dGTPase-like"/>
</dbReference>
<dbReference type="InterPro" id="IPR020779">
    <property type="entry name" value="dNTPase_1"/>
</dbReference>
<dbReference type="InterPro" id="IPR003607">
    <property type="entry name" value="HD/PDEase_dom"/>
</dbReference>
<dbReference type="InterPro" id="IPR006674">
    <property type="entry name" value="HD_domain"/>
</dbReference>
<dbReference type="NCBIfam" id="TIGR01353">
    <property type="entry name" value="dGTP_triPase"/>
    <property type="match status" value="1"/>
</dbReference>
<dbReference type="NCBIfam" id="NF003429">
    <property type="entry name" value="PRK04926.1"/>
    <property type="match status" value="1"/>
</dbReference>
<dbReference type="PANTHER" id="PTHR11373:SF32">
    <property type="entry name" value="DEOXYGUANOSINETRIPHOSPHATE TRIPHOSPHOHYDROLASE"/>
    <property type="match status" value="1"/>
</dbReference>
<dbReference type="PANTHER" id="PTHR11373">
    <property type="entry name" value="DEOXYNUCLEOSIDE TRIPHOSPHATE TRIPHOSPHOHYDROLASE"/>
    <property type="match status" value="1"/>
</dbReference>
<dbReference type="Pfam" id="PF01966">
    <property type="entry name" value="HD"/>
    <property type="match status" value="1"/>
</dbReference>
<dbReference type="SMART" id="SM00471">
    <property type="entry name" value="HDc"/>
    <property type="match status" value="1"/>
</dbReference>
<dbReference type="SUPFAM" id="SSF109604">
    <property type="entry name" value="HD-domain/PDEase-like"/>
    <property type="match status" value="1"/>
</dbReference>
<dbReference type="PROSITE" id="PS51831">
    <property type="entry name" value="HD"/>
    <property type="match status" value="1"/>
</dbReference>
<accession>Q8Z9B1</accession>
<organism>
    <name type="scientific">Salmonella typhi</name>
    <dbReference type="NCBI Taxonomy" id="90370"/>
    <lineage>
        <taxon>Bacteria</taxon>
        <taxon>Pseudomonadati</taxon>
        <taxon>Pseudomonadota</taxon>
        <taxon>Gammaproteobacteria</taxon>
        <taxon>Enterobacterales</taxon>
        <taxon>Enterobacteriaceae</taxon>
        <taxon>Salmonella</taxon>
    </lineage>
</organism>
<gene>
    <name evidence="2" type="primary">dgt</name>
    <name type="ordered locus">STY0230</name>
    <name type="ordered locus">t0209</name>
</gene>
<proteinExistence type="inferred from homology"/>
<feature type="initiator methionine" description="Removed" evidence="1">
    <location>
        <position position="1"/>
    </location>
</feature>
<feature type="chain" id="PRO_0000205284" description="Deoxyguanosinetriphosphate triphosphohydrolase">
    <location>
        <begin position="2"/>
        <end position="505"/>
    </location>
</feature>
<feature type="domain" description="HD" evidence="3">
    <location>
        <begin position="66"/>
        <end position="273"/>
    </location>
</feature>